<reference key="1">
    <citation type="journal article" date="2004" name="Environ. Microbiol.">
        <title>The genome of Desulfotalea psychrophila, a sulfate-reducing bacterium from permanently cold Arctic sediments.</title>
        <authorList>
            <person name="Rabus R."/>
            <person name="Ruepp A."/>
            <person name="Frickey T."/>
            <person name="Rattei T."/>
            <person name="Fartmann B."/>
            <person name="Stark M."/>
            <person name="Bauer M."/>
            <person name="Zibat A."/>
            <person name="Lombardot T."/>
            <person name="Becker I."/>
            <person name="Amann J."/>
            <person name="Gellner K."/>
            <person name="Teeling H."/>
            <person name="Leuschner W.D."/>
            <person name="Gloeckner F.-O."/>
            <person name="Lupas A.N."/>
            <person name="Amann R."/>
            <person name="Klenk H.-P."/>
        </authorList>
    </citation>
    <scope>NUCLEOTIDE SEQUENCE [LARGE SCALE GENOMIC DNA]</scope>
    <source>
        <strain>DSM 12343 / LSv54</strain>
    </source>
</reference>
<comment type="catalytic activity">
    <reaction evidence="1">
        <text>1-(2-carboxyphenylamino)-1-deoxy-D-ribulose 5-phosphate + H(+) = (1S,2R)-1-C-(indol-3-yl)glycerol 3-phosphate + CO2 + H2O</text>
        <dbReference type="Rhea" id="RHEA:23476"/>
        <dbReference type="ChEBI" id="CHEBI:15377"/>
        <dbReference type="ChEBI" id="CHEBI:15378"/>
        <dbReference type="ChEBI" id="CHEBI:16526"/>
        <dbReference type="ChEBI" id="CHEBI:58613"/>
        <dbReference type="ChEBI" id="CHEBI:58866"/>
        <dbReference type="EC" id="4.1.1.48"/>
    </reaction>
</comment>
<comment type="pathway">
    <text evidence="1">Amino-acid biosynthesis; L-tryptophan biosynthesis; L-tryptophan from chorismate: step 4/5.</text>
</comment>
<comment type="similarity">
    <text evidence="1">Belongs to the TrpC family.</text>
</comment>
<dbReference type="EC" id="4.1.1.48" evidence="1"/>
<dbReference type="EMBL" id="CR522870">
    <property type="protein sequence ID" value="CAG36351.1"/>
    <property type="molecule type" value="Genomic_DNA"/>
</dbReference>
<dbReference type="RefSeq" id="WP_011188863.1">
    <property type="nucleotide sequence ID" value="NC_006138.1"/>
</dbReference>
<dbReference type="SMR" id="Q6AMS4"/>
<dbReference type="STRING" id="177439.DP1622"/>
<dbReference type="KEGG" id="dps:DP1622"/>
<dbReference type="eggNOG" id="COG0134">
    <property type="taxonomic scope" value="Bacteria"/>
</dbReference>
<dbReference type="HOGENOM" id="CLU_034247_2_0_7"/>
<dbReference type="OrthoDB" id="9804217at2"/>
<dbReference type="UniPathway" id="UPA00035">
    <property type="reaction ID" value="UER00043"/>
</dbReference>
<dbReference type="Proteomes" id="UP000000602">
    <property type="component" value="Chromosome"/>
</dbReference>
<dbReference type="GO" id="GO:0004425">
    <property type="term" value="F:indole-3-glycerol-phosphate synthase activity"/>
    <property type="evidence" value="ECO:0007669"/>
    <property type="project" value="UniProtKB-UniRule"/>
</dbReference>
<dbReference type="GO" id="GO:0004640">
    <property type="term" value="F:phosphoribosylanthranilate isomerase activity"/>
    <property type="evidence" value="ECO:0007669"/>
    <property type="project" value="TreeGrafter"/>
</dbReference>
<dbReference type="GO" id="GO:0000162">
    <property type="term" value="P:L-tryptophan biosynthetic process"/>
    <property type="evidence" value="ECO:0007669"/>
    <property type="project" value="UniProtKB-UniRule"/>
</dbReference>
<dbReference type="CDD" id="cd00331">
    <property type="entry name" value="IGPS"/>
    <property type="match status" value="1"/>
</dbReference>
<dbReference type="FunFam" id="3.20.20.70:FF:000024">
    <property type="entry name" value="Indole-3-glycerol phosphate synthase"/>
    <property type="match status" value="1"/>
</dbReference>
<dbReference type="Gene3D" id="3.20.20.70">
    <property type="entry name" value="Aldolase class I"/>
    <property type="match status" value="1"/>
</dbReference>
<dbReference type="HAMAP" id="MF_00134_B">
    <property type="entry name" value="IGPS_B"/>
    <property type="match status" value="1"/>
</dbReference>
<dbReference type="InterPro" id="IPR013785">
    <property type="entry name" value="Aldolase_TIM"/>
</dbReference>
<dbReference type="InterPro" id="IPR045186">
    <property type="entry name" value="Indole-3-glycerol_P_synth"/>
</dbReference>
<dbReference type="InterPro" id="IPR013798">
    <property type="entry name" value="Indole-3-glycerol_P_synth_dom"/>
</dbReference>
<dbReference type="InterPro" id="IPR011060">
    <property type="entry name" value="RibuloseP-bd_barrel"/>
</dbReference>
<dbReference type="NCBIfam" id="NF001377">
    <property type="entry name" value="PRK00278.2-4"/>
    <property type="match status" value="1"/>
</dbReference>
<dbReference type="PANTHER" id="PTHR22854:SF2">
    <property type="entry name" value="INDOLE-3-GLYCEROL-PHOSPHATE SYNTHASE"/>
    <property type="match status" value="1"/>
</dbReference>
<dbReference type="PANTHER" id="PTHR22854">
    <property type="entry name" value="TRYPTOPHAN BIOSYNTHESIS PROTEIN"/>
    <property type="match status" value="1"/>
</dbReference>
<dbReference type="Pfam" id="PF00218">
    <property type="entry name" value="IGPS"/>
    <property type="match status" value="1"/>
</dbReference>
<dbReference type="SUPFAM" id="SSF51366">
    <property type="entry name" value="Ribulose-phoshate binding barrel"/>
    <property type="match status" value="1"/>
</dbReference>
<accession>Q6AMS4</accession>
<keyword id="KW-0028">Amino-acid biosynthesis</keyword>
<keyword id="KW-0057">Aromatic amino acid biosynthesis</keyword>
<keyword id="KW-0210">Decarboxylase</keyword>
<keyword id="KW-0456">Lyase</keyword>
<keyword id="KW-1185">Reference proteome</keyword>
<keyword id="KW-0822">Tryptophan biosynthesis</keyword>
<name>TRPC_DESPS</name>
<protein>
    <recommendedName>
        <fullName evidence="1">Indole-3-glycerol phosphate synthase</fullName>
        <shortName evidence="1">IGPS</shortName>
        <ecNumber evidence="1">4.1.1.48</ecNumber>
    </recommendedName>
</protein>
<proteinExistence type="inferred from homology"/>
<gene>
    <name evidence="1" type="primary">trpC</name>
    <name type="ordered locus">DP1622</name>
</gene>
<feature type="chain" id="PRO_1000095866" description="Indole-3-glycerol phosphate synthase">
    <location>
        <begin position="1"/>
        <end position="260"/>
    </location>
</feature>
<organism>
    <name type="scientific">Desulfotalea psychrophila (strain LSv54 / DSM 12343)</name>
    <dbReference type="NCBI Taxonomy" id="177439"/>
    <lineage>
        <taxon>Bacteria</taxon>
        <taxon>Pseudomonadati</taxon>
        <taxon>Thermodesulfobacteriota</taxon>
        <taxon>Desulfobulbia</taxon>
        <taxon>Desulfobulbales</taxon>
        <taxon>Desulfocapsaceae</taxon>
        <taxon>Desulfotalea</taxon>
    </lineage>
</organism>
<evidence type="ECO:0000255" key="1">
    <source>
        <dbReference type="HAMAP-Rule" id="MF_00134"/>
    </source>
</evidence>
<sequence length="260" mass="28880">MSDILDRIVARKHEEVAQLRRDGISLPEEFAEKRPAPPRGFRQSLLSHQGLSIIAEAKKASPSKGLICEDFDPVAIAKNYERCGVQAISVLTDRDFFQGDLRYLLQVREAVGLPVLRKDFIIDELQLKEASLYGADAILLIAAILDEAQLRDYRCYAEELGMDSLVEVHDEEETEKALASGCNLLGVNNRNLKDFSVDVETTFRIRKMVPIEIPLVSESGLKEAADLRRLAEAGVCAALIGETLMRMGSAGDVLAELWRP</sequence>